<geneLocation type="chloroplast"/>
<accession>P69665</accession>
<accession>Q9G1K2</accession>
<comment type="function">
    <text evidence="1">One of the primary rRNA binding proteins, it binds directly to 16S rRNA where it nucleates assembly of the head domain of the 30S subunit.</text>
</comment>
<comment type="subunit">
    <text>Part of the 30S ribosomal subunit.</text>
</comment>
<comment type="subcellular location">
    <subcellularLocation>
        <location>Plastid</location>
        <location>Chloroplast</location>
    </subcellularLocation>
</comment>
<comment type="similarity">
    <text evidence="2">Belongs to the universal ribosomal protein uS7 family.</text>
</comment>
<feature type="chain" id="PRO_0000124464" description="Small ribosomal subunit protein uS7c">
    <location>
        <begin position="1"/>
        <end position="155"/>
    </location>
</feature>
<gene>
    <name type="primary">rps7</name>
</gene>
<evidence type="ECO:0000250" key="1"/>
<evidence type="ECO:0000305" key="2"/>
<reference key="1">
    <citation type="journal article" date="2000" name="Am. J. Bot.">
        <title>Utility of 17 chloroplast genes for inferring the phylogeny of the basal angiosperms.</title>
        <authorList>
            <person name="Graham S.W."/>
            <person name="Olmstead R.G."/>
        </authorList>
    </citation>
    <scope>NUCLEOTIDE SEQUENCE [GENOMIC DNA]</scope>
</reference>
<proteinExistence type="inferred from homology"/>
<protein>
    <recommendedName>
        <fullName evidence="2">Small ribosomal subunit protein uS7c</fullName>
    </recommendedName>
    <alternativeName>
        <fullName>30S ribosomal protein S7, chloroplastic</fullName>
    </alternativeName>
</protein>
<organism>
    <name type="scientific">Illicium parviflorum</name>
    <name type="common">Yellow anise tree</name>
    <name type="synonym">Badianifera parviflora</name>
    <dbReference type="NCBI Taxonomy" id="13099"/>
    <lineage>
        <taxon>Eukaryota</taxon>
        <taxon>Viridiplantae</taxon>
        <taxon>Streptophyta</taxon>
        <taxon>Embryophyta</taxon>
        <taxon>Tracheophyta</taxon>
        <taxon>Spermatophyta</taxon>
        <taxon>Magnoliopsida</taxon>
        <taxon>Austrobaileyales</taxon>
        <taxon>Schisandraceae</taxon>
        <taxon>Illicium</taxon>
    </lineage>
</organism>
<name>RR7_ILLPA</name>
<keyword id="KW-0150">Chloroplast</keyword>
<keyword id="KW-0934">Plastid</keyword>
<keyword id="KW-0687">Ribonucleoprotein</keyword>
<keyword id="KW-0689">Ribosomal protein</keyword>
<keyword id="KW-0694">RNA-binding</keyword>
<keyword id="KW-0699">rRNA-binding</keyword>
<sequence length="155" mass="17343">MSRRGTAEEKTAKSDPIYRNRLVNMLVNRILKHGKKSLAYQIIYRAVKKIQQKTETNPLSVLRQAIRGVTPDIAVKARRVGGSTHQVPIEIGSTQGKALAIRWLLGASRKRPGRNMAFKLSSELVDAAKGSGDAIRKKEETHRMAEANRAFAHFR</sequence>
<dbReference type="EMBL" id="AF123780">
    <property type="protein sequence ID" value="AAG26119.1"/>
    <property type="molecule type" value="Genomic_DNA"/>
</dbReference>
<dbReference type="SMR" id="P69665"/>
<dbReference type="GO" id="GO:0009507">
    <property type="term" value="C:chloroplast"/>
    <property type="evidence" value="ECO:0007669"/>
    <property type="project" value="UniProtKB-SubCell"/>
</dbReference>
<dbReference type="GO" id="GO:0015935">
    <property type="term" value="C:small ribosomal subunit"/>
    <property type="evidence" value="ECO:0007669"/>
    <property type="project" value="InterPro"/>
</dbReference>
<dbReference type="GO" id="GO:0019843">
    <property type="term" value="F:rRNA binding"/>
    <property type="evidence" value="ECO:0007669"/>
    <property type="project" value="UniProtKB-UniRule"/>
</dbReference>
<dbReference type="GO" id="GO:0003735">
    <property type="term" value="F:structural constituent of ribosome"/>
    <property type="evidence" value="ECO:0007669"/>
    <property type="project" value="InterPro"/>
</dbReference>
<dbReference type="GO" id="GO:0006412">
    <property type="term" value="P:translation"/>
    <property type="evidence" value="ECO:0007669"/>
    <property type="project" value="UniProtKB-UniRule"/>
</dbReference>
<dbReference type="CDD" id="cd14871">
    <property type="entry name" value="uS7_Chloroplast"/>
    <property type="match status" value="1"/>
</dbReference>
<dbReference type="FunFam" id="1.10.455.10:FF:000001">
    <property type="entry name" value="30S ribosomal protein S7"/>
    <property type="match status" value="1"/>
</dbReference>
<dbReference type="Gene3D" id="1.10.455.10">
    <property type="entry name" value="Ribosomal protein S7 domain"/>
    <property type="match status" value="1"/>
</dbReference>
<dbReference type="HAMAP" id="MF_00480_B">
    <property type="entry name" value="Ribosomal_uS7_B"/>
    <property type="match status" value="1"/>
</dbReference>
<dbReference type="InterPro" id="IPR000235">
    <property type="entry name" value="Ribosomal_uS7"/>
</dbReference>
<dbReference type="InterPro" id="IPR005717">
    <property type="entry name" value="Ribosomal_uS7_bac/org-type"/>
</dbReference>
<dbReference type="InterPro" id="IPR020606">
    <property type="entry name" value="Ribosomal_uS7_CS"/>
</dbReference>
<dbReference type="InterPro" id="IPR023798">
    <property type="entry name" value="Ribosomal_uS7_dom"/>
</dbReference>
<dbReference type="InterPro" id="IPR036823">
    <property type="entry name" value="Ribosomal_uS7_dom_sf"/>
</dbReference>
<dbReference type="NCBIfam" id="TIGR01029">
    <property type="entry name" value="rpsG_bact"/>
    <property type="match status" value="1"/>
</dbReference>
<dbReference type="PANTHER" id="PTHR11205">
    <property type="entry name" value="RIBOSOMAL PROTEIN S7"/>
    <property type="match status" value="1"/>
</dbReference>
<dbReference type="Pfam" id="PF00177">
    <property type="entry name" value="Ribosomal_S7"/>
    <property type="match status" value="1"/>
</dbReference>
<dbReference type="PIRSF" id="PIRSF002122">
    <property type="entry name" value="RPS7p_RPS7a_RPS5e_RPS7o"/>
    <property type="match status" value="1"/>
</dbReference>
<dbReference type="SUPFAM" id="SSF47973">
    <property type="entry name" value="Ribosomal protein S7"/>
    <property type="match status" value="1"/>
</dbReference>
<dbReference type="PROSITE" id="PS00052">
    <property type="entry name" value="RIBOSOMAL_S7"/>
    <property type="match status" value="1"/>
</dbReference>